<comment type="function">
    <text evidence="6">Exo-fructosidase that can hydrolyze both levan and inulin, leading to the production of free fructose. Is also able to hydrolyze sucrose and to a small extent raffinose, but not melezitose, stachylose, cellobiose, maltose, and lactose.</text>
</comment>
<comment type="catalytic activity">
    <reaction>
        <text>Hydrolysis of terminal, non-reducing (2-&gt;1)- and (2-&gt;6)-linked beta-D-fructofuranose residues in fructans.</text>
        <dbReference type="EC" id="3.2.1.80"/>
    </reaction>
</comment>
<comment type="activity regulation">
    <text evidence="6">Is completely inhibited by Ag(+) and Hg(2+) ions.</text>
</comment>
<comment type="biophysicochemical properties">
    <kinetics>
        <KM evidence="6">1.2 uM for levan (at pH 5.5 and 55 degrees Celsius)</KM>
        <KM evidence="6">6.7 mM for inulin (at pH 5.5 and 55 degrees Celsius)</KM>
        <KM evidence="6">64 mM for sucrose (at pH 5.5 and 55 degrees Celsius)</KM>
    </kinetics>
    <phDependence>
        <text evidence="6">Optimum pH is 5.5 for inulin hydrolysis.</text>
    </phDependence>
    <temperatureDependence>
        <text evidence="6">Optimum temperature is 55 degrees Celsius for inulin hydrolysis. Is rapidly inactivated at 60 degrees Celsius. High stable at 50 and 55 degrees Celsius.</text>
    </temperatureDependence>
</comment>
<comment type="subcellular location">
    <subcellularLocation>
        <location evidence="4">Secreted</location>
    </subcellularLocation>
</comment>
<comment type="induction">
    <text evidence="5">Induced by low concentrations of fructose, but not by sucrose. Repressed by glucose or high concentrations of fructose.</text>
</comment>
<comment type="miscellaneous">
    <text>Levanase cannot be detected in the wild-type B.subtilis but is mostly secreted into the culture medium by SacL mutants, especially at the end of the exponential growth phase.</text>
</comment>
<comment type="similarity">
    <text evidence="7">Belongs to the glycosyl hydrolase 32 family.</text>
</comment>
<comment type="sequence caution" evidence="7">
    <conflict type="erroneous initiation">
        <sequence resource="EMBL-CDS" id="CAA29137"/>
    </conflict>
</comment>
<name>SACC_BACSU</name>
<sequence length="677" mass="75951">MKKRLIQVMIMFTLLLTMAFSADAADSSYYDEDYRPQYHFTPEANWMNDPNGMVYYAGEYHLFYQYHPYGLQWGPMHWGHAVSKDLVTWEHLPVALYPDEKGTIFSGSAVVDKNNTSGFQTGKEKPLVAIYTQDREGHQVQSIAYSNDKGRTWTKYAGNPVIPNPGKKDFRDPKVFWYEKEKKWVMVLAAGDRILIYTSKNLKQWTYASEFGQDQGSHGGVWECPDLFELPVDGNPNQKKWVMQVSVGNGAVSGGSGMQYFVGDFDGTHFKNENPPNKVLWTDYGRDFYAAVSWSDIPSTDSRRLWLGWMSNWQYANDVPTSPWRSATSIPRELKLKAFTEGVRVVQTPVKELETIRGTSKKWKNLTISPASHNVLAGQSGDAYEINAEFKVSPGSAAEFGFKVRTGENQFTKVGYDRRNAKLFVDRSESGNDTFNPAFNTGKETAPLKPVNGKVKLRIFVDRSSVEVFGNDGKQVITDIILPDRSSKGLELYAANGGVKVKSLTIHPLKKVWGTTPFMSNMTGWTTVNGTWADTIEGKQGRSDGDSFILSSASGSDFTYESDITIKDGNGRGAGALMFRSDKDAKNGYLANVDAKHDLVKFFKFENGAASVIAEYKTPIDVNKKYHLKTEAEGDRFKIYLDDRLVIDAHDSVFSEGQFGLNVWDATAVFQNVTKES</sequence>
<keyword id="KW-0002">3D-structure</keyword>
<keyword id="KW-0119">Carbohydrate metabolism</keyword>
<keyword id="KW-0326">Glycosidase</keyword>
<keyword id="KW-0378">Hydrolase</keyword>
<keyword id="KW-1185">Reference proteome</keyword>
<keyword id="KW-0964">Secreted</keyword>
<keyword id="KW-0732">Signal</keyword>
<proteinExistence type="evidence at protein level"/>
<gene>
    <name type="primary">sacC</name>
    <name type="ordered locus">BSU27030</name>
</gene>
<accession>P05656</accession>
<feature type="signal peptide" evidence="2">
    <location>
        <begin position="1"/>
        <end position="24"/>
    </location>
</feature>
<feature type="chain" id="PRO_0000033405" description="Levanase">
    <location>
        <begin position="25"/>
        <end position="677"/>
    </location>
</feature>
<feature type="active site" evidence="3">
    <location>
        <position position="49"/>
    </location>
</feature>
<feature type="binding site" evidence="1">
    <location>
        <begin position="46"/>
        <end position="49"/>
    </location>
    <ligand>
        <name>substrate</name>
    </ligand>
</feature>
<feature type="binding site" evidence="1">
    <location>
        <position position="65"/>
    </location>
    <ligand>
        <name>substrate</name>
    </ligand>
</feature>
<feature type="binding site" evidence="1">
    <location>
        <position position="73"/>
    </location>
    <ligand>
        <name>substrate</name>
    </ligand>
</feature>
<feature type="binding site" evidence="1">
    <location>
        <begin position="105"/>
        <end position="106"/>
    </location>
    <ligand>
        <name>substrate</name>
    </ligand>
</feature>
<feature type="binding site" evidence="1">
    <location>
        <begin position="171"/>
        <end position="172"/>
    </location>
    <ligand>
        <name>substrate</name>
    </ligand>
</feature>
<feature type="binding site" evidence="1">
    <location>
        <position position="223"/>
    </location>
    <ligand>
        <name>substrate</name>
    </ligand>
</feature>
<feature type="binding site" evidence="1">
    <location>
        <position position="313"/>
    </location>
    <ligand>
        <name>substrate</name>
    </ligand>
</feature>
<feature type="sequence conflict" description="In Ref. 2; CAA68542." evidence="7" ref="2">
    <original>Q</original>
    <variation>L</variation>
    <location>
        <position position="658"/>
    </location>
</feature>
<feature type="strand" evidence="8">
    <location>
        <begin position="529"/>
        <end position="535"/>
    </location>
</feature>
<feature type="strand" evidence="8">
    <location>
        <begin position="538"/>
        <end position="581"/>
    </location>
</feature>
<feature type="strand" evidence="8">
    <location>
        <begin position="585"/>
        <end position="594"/>
    </location>
</feature>
<feature type="turn" evidence="8">
    <location>
        <begin position="595"/>
        <end position="598"/>
    </location>
</feature>
<feature type="strand" evidence="8">
    <location>
        <begin position="599"/>
        <end position="606"/>
    </location>
</feature>
<feature type="strand" evidence="8">
    <location>
        <begin position="609"/>
        <end position="617"/>
    </location>
</feature>
<feature type="strand" evidence="8">
    <location>
        <begin position="626"/>
        <end position="633"/>
    </location>
</feature>
<feature type="strand" evidence="8">
    <location>
        <begin position="636"/>
        <end position="641"/>
    </location>
</feature>
<feature type="strand" evidence="8">
    <location>
        <begin position="644"/>
        <end position="650"/>
    </location>
</feature>
<feature type="strand" evidence="8">
    <location>
        <begin position="657"/>
        <end position="676"/>
    </location>
</feature>
<reference key="1">
    <citation type="journal article" date="1987" name="Mol. Gen. Genet.">
        <title>Characterization of the levanase gene of Bacillus subtilis which shows homology to yeast invertase.</title>
        <authorList>
            <person name="Martin I."/>
            <person name="Debarbouille M."/>
            <person name="Ferrari E."/>
            <person name="Klier A."/>
            <person name="Rapoport G."/>
        </authorList>
    </citation>
    <scope>NUCLEOTIDE SEQUENCE [GENOMIC DNA]</scope>
</reference>
<reference key="2">
    <citation type="journal article" date="1987" name="Nucleic Acids Res.">
        <title>Nucleotide sequence of a cloned 2.5 kb PstI-EcoRI Bacillus subtilis DNA fragment coding for levanase.</title>
        <authorList>
            <person name="Schoergendorfer K."/>
            <person name="Schwab H."/>
            <person name="Lafferty R.M."/>
        </authorList>
    </citation>
    <scope>NUCLEOTIDE SEQUENCE [GENOMIC DNA]</scope>
    <source>
        <strain>168</strain>
    </source>
</reference>
<reference key="3">
    <citation type="journal article" date="1997" name="Microbiology">
        <title>A 23911 bp region of the Bacillus subtilis genome comprising genes located upstream and downstream of the lev operon.</title>
        <authorList>
            <person name="Parro V."/>
            <person name="San Roman M."/>
            <person name="Galindo I."/>
            <person name="Purnelle B."/>
            <person name="Bolotin A."/>
            <person name="Sorokin A."/>
            <person name="Mellado R.P."/>
        </authorList>
    </citation>
    <scope>NUCLEOTIDE SEQUENCE [GENOMIC DNA]</scope>
    <source>
        <strain>168</strain>
    </source>
</reference>
<reference key="4">
    <citation type="journal article" date="1997" name="Nature">
        <title>The complete genome sequence of the Gram-positive bacterium Bacillus subtilis.</title>
        <authorList>
            <person name="Kunst F."/>
            <person name="Ogasawara N."/>
            <person name="Moszer I."/>
            <person name="Albertini A.M."/>
            <person name="Alloni G."/>
            <person name="Azevedo V."/>
            <person name="Bertero M.G."/>
            <person name="Bessieres P."/>
            <person name="Bolotin A."/>
            <person name="Borchert S."/>
            <person name="Borriss R."/>
            <person name="Boursier L."/>
            <person name="Brans A."/>
            <person name="Braun M."/>
            <person name="Brignell S.C."/>
            <person name="Bron S."/>
            <person name="Brouillet S."/>
            <person name="Bruschi C.V."/>
            <person name="Caldwell B."/>
            <person name="Capuano V."/>
            <person name="Carter N.M."/>
            <person name="Choi S.-K."/>
            <person name="Codani J.-J."/>
            <person name="Connerton I.F."/>
            <person name="Cummings N.J."/>
            <person name="Daniel R.A."/>
            <person name="Denizot F."/>
            <person name="Devine K.M."/>
            <person name="Duesterhoeft A."/>
            <person name="Ehrlich S.D."/>
            <person name="Emmerson P.T."/>
            <person name="Entian K.-D."/>
            <person name="Errington J."/>
            <person name="Fabret C."/>
            <person name="Ferrari E."/>
            <person name="Foulger D."/>
            <person name="Fritz C."/>
            <person name="Fujita M."/>
            <person name="Fujita Y."/>
            <person name="Fuma S."/>
            <person name="Galizzi A."/>
            <person name="Galleron N."/>
            <person name="Ghim S.-Y."/>
            <person name="Glaser P."/>
            <person name="Goffeau A."/>
            <person name="Golightly E.J."/>
            <person name="Grandi G."/>
            <person name="Guiseppi G."/>
            <person name="Guy B.J."/>
            <person name="Haga K."/>
            <person name="Haiech J."/>
            <person name="Harwood C.R."/>
            <person name="Henaut A."/>
            <person name="Hilbert H."/>
            <person name="Holsappel S."/>
            <person name="Hosono S."/>
            <person name="Hullo M.-F."/>
            <person name="Itaya M."/>
            <person name="Jones L.-M."/>
            <person name="Joris B."/>
            <person name="Karamata D."/>
            <person name="Kasahara Y."/>
            <person name="Klaerr-Blanchard M."/>
            <person name="Klein C."/>
            <person name="Kobayashi Y."/>
            <person name="Koetter P."/>
            <person name="Koningstein G."/>
            <person name="Krogh S."/>
            <person name="Kumano M."/>
            <person name="Kurita K."/>
            <person name="Lapidus A."/>
            <person name="Lardinois S."/>
            <person name="Lauber J."/>
            <person name="Lazarevic V."/>
            <person name="Lee S.-M."/>
            <person name="Levine A."/>
            <person name="Liu H."/>
            <person name="Masuda S."/>
            <person name="Mauel C."/>
            <person name="Medigue C."/>
            <person name="Medina N."/>
            <person name="Mellado R.P."/>
            <person name="Mizuno M."/>
            <person name="Moestl D."/>
            <person name="Nakai S."/>
            <person name="Noback M."/>
            <person name="Noone D."/>
            <person name="O'Reilly M."/>
            <person name="Ogawa K."/>
            <person name="Ogiwara A."/>
            <person name="Oudega B."/>
            <person name="Park S.-H."/>
            <person name="Parro V."/>
            <person name="Pohl T.M."/>
            <person name="Portetelle D."/>
            <person name="Porwollik S."/>
            <person name="Prescott A.M."/>
            <person name="Presecan E."/>
            <person name="Pujic P."/>
            <person name="Purnelle B."/>
            <person name="Rapoport G."/>
            <person name="Rey M."/>
            <person name="Reynolds S."/>
            <person name="Rieger M."/>
            <person name="Rivolta C."/>
            <person name="Rocha E."/>
            <person name="Roche B."/>
            <person name="Rose M."/>
            <person name="Sadaie Y."/>
            <person name="Sato T."/>
            <person name="Scanlan E."/>
            <person name="Schleich S."/>
            <person name="Schroeter R."/>
            <person name="Scoffone F."/>
            <person name="Sekiguchi J."/>
            <person name="Sekowska A."/>
            <person name="Seror S.J."/>
            <person name="Serror P."/>
            <person name="Shin B.-S."/>
            <person name="Soldo B."/>
            <person name="Sorokin A."/>
            <person name="Tacconi E."/>
            <person name="Takagi T."/>
            <person name="Takahashi H."/>
            <person name="Takemaru K."/>
            <person name="Takeuchi M."/>
            <person name="Tamakoshi A."/>
            <person name="Tanaka T."/>
            <person name="Terpstra P."/>
            <person name="Tognoni A."/>
            <person name="Tosato V."/>
            <person name="Uchiyama S."/>
            <person name="Vandenbol M."/>
            <person name="Vannier F."/>
            <person name="Vassarotti A."/>
            <person name="Viari A."/>
            <person name="Wambutt R."/>
            <person name="Wedler E."/>
            <person name="Wedler H."/>
            <person name="Weitzenegger T."/>
            <person name="Winters P."/>
            <person name="Wipat A."/>
            <person name="Yamamoto H."/>
            <person name="Yamane K."/>
            <person name="Yasumoto K."/>
            <person name="Yata K."/>
            <person name="Yoshida K."/>
            <person name="Yoshikawa H.-F."/>
            <person name="Zumstein E."/>
            <person name="Yoshikawa H."/>
            <person name="Danchin A."/>
        </authorList>
    </citation>
    <scope>NUCLEOTIDE SEQUENCE [LARGE SCALE GENOMIC DNA]</scope>
    <source>
        <strain>168</strain>
    </source>
</reference>
<reference key="5">
    <citation type="journal article" date="1990" name="J. Mol. Biol.">
        <title>Levanase operon of Bacillus subtilis includes a fructose-specific phosphotransferase system regulating the expression of the operon.</title>
        <authorList>
            <person name="Martin-Verstraete I."/>
            <person name="Debarbouille M."/>
            <person name="Klier A."/>
            <person name="Rapoport G."/>
        </authorList>
    </citation>
    <scope>NUCLEOTIDE SEQUENCE [GENOMIC DNA] OF 1-10</scope>
</reference>
<reference key="6">
    <citation type="journal article" date="1989" name="J. Bacteriol.">
        <title>Induction and metabolite regulation of levanase synthesis in Bacillus subtilis.</title>
        <authorList>
            <person name="Martin I."/>
            <person name="Debarbouille M."/>
            <person name="Klier A."/>
            <person name="Rapoport G."/>
        </authorList>
    </citation>
    <scope>INDUCTION</scope>
    <scope>TRANSCRIPTIONAL REGULATION</scope>
</reference>
<reference key="7">
    <citation type="journal article" date="1995" name="Appl. Environ. Microbiol.">
        <title>Purification and characterization of the Bacillus subtilis levanase produced in Escherichia coli.</title>
        <authorList>
            <person name="Wanker E."/>
            <person name="Huber A."/>
            <person name="Schwab H."/>
        </authorList>
    </citation>
    <scope>FUNCTION</scope>
    <scope>SUBSTRATE SPECIFICITY</scope>
    <scope>ACTIVITY REGULATION</scope>
    <scope>BIOPHYSICOCHEMICAL PROPERTIES</scope>
</reference>
<reference key="8">
    <citation type="journal article" date="1999" name="Microbiology">
        <title>Kinetics of the secretion of Bacillus subtilis levanase overproduced during the exponential phase of growth.</title>
        <authorList>
            <person name="Leloup L."/>
            <person name="Le Saux J."/>
            <person name="Petit-Glatron M.-F."/>
            <person name="Chambert R."/>
        </authorList>
    </citation>
    <scope>SUBCELLULAR LOCATION</scope>
    <scope>SECRETION PROCESS</scope>
</reference>
<organism>
    <name type="scientific">Bacillus subtilis (strain 168)</name>
    <dbReference type="NCBI Taxonomy" id="224308"/>
    <lineage>
        <taxon>Bacteria</taxon>
        <taxon>Bacillati</taxon>
        <taxon>Bacillota</taxon>
        <taxon>Bacilli</taxon>
        <taxon>Bacillales</taxon>
        <taxon>Bacillaceae</taxon>
        <taxon>Bacillus</taxon>
    </lineage>
</organism>
<protein>
    <recommendedName>
        <fullName>Levanase</fullName>
        <ecNumber>3.2.1.80</ecNumber>
    </recommendedName>
    <alternativeName>
        <fullName>Beta-D-fructofuranosidase</fullName>
    </alternativeName>
    <alternativeName>
        <fullName>Exo-beta-D-fructosidase</fullName>
    </alternativeName>
    <alternativeName>
        <fullName>Exo-levanase</fullName>
    </alternativeName>
</protein>
<evidence type="ECO:0000250" key="1"/>
<evidence type="ECO:0000255" key="2"/>
<evidence type="ECO:0000255" key="3">
    <source>
        <dbReference type="PROSITE-ProRule" id="PRU10067"/>
    </source>
</evidence>
<evidence type="ECO:0000269" key="4">
    <source>
    </source>
</evidence>
<evidence type="ECO:0000269" key="5">
    <source>
    </source>
</evidence>
<evidence type="ECO:0000269" key="6">
    <source>
    </source>
</evidence>
<evidence type="ECO:0000305" key="7"/>
<evidence type="ECO:0007829" key="8">
    <source>
        <dbReference type="PDB" id="4B1M"/>
    </source>
</evidence>
<dbReference type="EC" id="3.2.1.80"/>
<dbReference type="EMBL" id="X05649">
    <property type="protein sequence ID" value="CAA29137.1"/>
    <property type="status" value="ALT_INIT"/>
    <property type="molecule type" value="Genomic_DNA"/>
</dbReference>
<dbReference type="EMBL" id="Y00485">
    <property type="protein sequence ID" value="CAA68542.1"/>
    <property type="molecule type" value="Genomic_DNA"/>
</dbReference>
<dbReference type="EMBL" id="X92868">
    <property type="protein sequence ID" value="CAA63465.1"/>
    <property type="molecule type" value="Genomic_DNA"/>
</dbReference>
<dbReference type="EMBL" id="AL009126">
    <property type="protein sequence ID" value="CAB14645.1"/>
    <property type="molecule type" value="Genomic_DNA"/>
</dbReference>
<dbReference type="EMBL" id="X56098">
    <property type="protein sequence ID" value="CAA39581.1"/>
    <property type="molecule type" value="Genomic_DNA"/>
</dbReference>
<dbReference type="PIR" id="A27286">
    <property type="entry name" value="A27286"/>
</dbReference>
<dbReference type="RefSeq" id="NP_390581.1">
    <property type="nucleotide sequence ID" value="NC_000964.3"/>
</dbReference>
<dbReference type="RefSeq" id="WP_004398804.1">
    <property type="nucleotide sequence ID" value="NC_000964.3"/>
</dbReference>
<dbReference type="PDB" id="4AZZ">
    <property type="method" value="X-ray"/>
    <property type="resolution" value="1.70 A"/>
    <property type="chains" value="A/B=515-677"/>
</dbReference>
<dbReference type="PDB" id="4B1L">
    <property type="method" value="X-ray"/>
    <property type="resolution" value="1.65 A"/>
    <property type="chains" value="A=515-677"/>
</dbReference>
<dbReference type="PDB" id="4B1M">
    <property type="method" value="X-ray"/>
    <property type="resolution" value="1.10 A"/>
    <property type="chains" value="A/B/C=515-677"/>
</dbReference>
<dbReference type="PDBsum" id="4AZZ"/>
<dbReference type="PDBsum" id="4B1L"/>
<dbReference type="PDBsum" id="4B1M"/>
<dbReference type="SMR" id="P05656"/>
<dbReference type="FunCoup" id="P05656">
    <property type="interactions" value="152"/>
</dbReference>
<dbReference type="STRING" id="224308.BSU27030"/>
<dbReference type="CAZy" id="CBM66">
    <property type="family name" value="Carbohydrate-Binding Module Family 66"/>
</dbReference>
<dbReference type="CAZy" id="GH32">
    <property type="family name" value="Glycoside Hydrolase Family 32"/>
</dbReference>
<dbReference type="PaxDb" id="224308-BSU27030"/>
<dbReference type="DNASU" id="938092"/>
<dbReference type="EnsemblBacteria" id="CAB14645">
    <property type="protein sequence ID" value="CAB14645"/>
    <property type="gene ID" value="BSU_27030"/>
</dbReference>
<dbReference type="GeneID" id="938092"/>
<dbReference type="KEGG" id="bsu:BSU27030"/>
<dbReference type="PATRIC" id="fig|224308.179.peg.2936"/>
<dbReference type="eggNOG" id="COG1621">
    <property type="taxonomic scope" value="Bacteria"/>
</dbReference>
<dbReference type="InParanoid" id="P05656"/>
<dbReference type="OrthoDB" id="9759709at2"/>
<dbReference type="PhylomeDB" id="P05656"/>
<dbReference type="BioCyc" id="BSUB:BSU27030-MONOMER"/>
<dbReference type="BRENDA" id="3.2.1.80">
    <property type="organism ID" value="658"/>
</dbReference>
<dbReference type="EvolutionaryTrace" id="P05656"/>
<dbReference type="Proteomes" id="UP000001570">
    <property type="component" value="Chromosome"/>
</dbReference>
<dbReference type="GO" id="GO:0005737">
    <property type="term" value="C:cytoplasm"/>
    <property type="evidence" value="ECO:0000318"/>
    <property type="project" value="GO_Central"/>
</dbReference>
<dbReference type="GO" id="GO:0005576">
    <property type="term" value="C:extracellular region"/>
    <property type="evidence" value="ECO:0007669"/>
    <property type="project" value="UniProtKB-SubCell"/>
</dbReference>
<dbReference type="GO" id="GO:0051669">
    <property type="term" value="F:fructan beta-fructosidase activity"/>
    <property type="evidence" value="ECO:0007669"/>
    <property type="project" value="UniProtKB-EC"/>
</dbReference>
<dbReference type="GO" id="GO:0004575">
    <property type="term" value="F:sucrose alpha-glucosidase activity"/>
    <property type="evidence" value="ECO:0000318"/>
    <property type="project" value="GO_Central"/>
</dbReference>
<dbReference type="GO" id="GO:0005987">
    <property type="term" value="P:sucrose catabolic process"/>
    <property type="evidence" value="ECO:0000318"/>
    <property type="project" value="GO_Central"/>
</dbReference>
<dbReference type="CDD" id="cd18622">
    <property type="entry name" value="GH32_Inu-like"/>
    <property type="match status" value="1"/>
</dbReference>
<dbReference type="FunFam" id="2.60.120.560:FF:000003">
    <property type="entry name" value="Extracellular exo-inulinase inuE"/>
    <property type="match status" value="1"/>
</dbReference>
<dbReference type="FunFam" id="2.115.10.20:FF:000003">
    <property type="entry name" value="Levanbiose-producing levanase"/>
    <property type="match status" value="1"/>
</dbReference>
<dbReference type="Gene3D" id="2.60.120.560">
    <property type="entry name" value="Exo-inulinase, domain 1"/>
    <property type="match status" value="2"/>
</dbReference>
<dbReference type="Gene3D" id="2.115.10.20">
    <property type="entry name" value="Glycosyl hydrolase domain, family 43"/>
    <property type="match status" value="1"/>
</dbReference>
<dbReference type="InterPro" id="IPR010496">
    <property type="entry name" value="3-keto-disaccharide_hydrolase"/>
</dbReference>
<dbReference type="InterPro" id="IPR013320">
    <property type="entry name" value="ConA-like_dom_sf"/>
</dbReference>
<dbReference type="InterPro" id="IPR001362">
    <property type="entry name" value="Glyco_hydro_32"/>
</dbReference>
<dbReference type="InterPro" id="IPR018053">
    <property type="entry name" value="Glyco_hydro_32_AS"/>
</dbReference>
<dbReference type="InterPro" id="IPR013189">
    <property type="entry name" value="Glyco_hydro_32_C"/>
</dbReference>
<dbReference type="InterPro" id="IPR013148">
    <property type="entry name" value="Glyco_hydro_32_N"/>
</dbReference>
<dbReference type="InterPro" id="IPR023296">
    <property type="entry name" value="Glyco_hydro_beta-prop_sf"/>
</dbReference>
<dbReference type="PANTHER" id="PTHR42800">
    <property type="entry name" value="EXOINULINASE INUD (AFU_ORTHOLOGUE AFUA_5G00480)"/>
    <property type="match status" value="1"/>
</dbReference>
<dbReference type="PANTHER" id="PTHR42800:SF1">
    <property type="entry name" value="EXOINULINASE INUD (AFU_ORTHOLOGUE AFUA_5G00480)"/>
    <property type="match status" value="1"/>
</dbReference>
<dbReference type="Pfam" id="PF06439">
    <property type="entry name" value="3keto-disac_hyd"/>
    <property type="match status" value="1"/>
</dbReference>
<dbReference type="Pfam" id="PF08244">
    <property type="entry name" value="Glyco_hydro_32C"/>
    <property type="match status" value="1"/>
</dbReference>
<dbReference type="Pfam" id="PF00251">
    <property type="entry name" value="Glyco_hydro_32N"/>
    <property type="match status" value="1"/>
</dbReference>
<dbReference type="SMART" id="SM00640">
    <property type="entry name" value="Glyco_32"/>
    <property type="match status" value="1"/>
</dbReference>
<dbReference type="SUPFAM" id="SSF75005">
    <property type="entry name" value="Arabinanase/levansucrase/invertase"/>
    <property type="match status" value="1"/>
</dbReference>
<dbReference type="SUPFAM" id="SSF49899">
    <property type="entry name" value="Concanavalin A-like lectins/glucanases"/>
    <property type="match status" value="1"/>
</dbReference>
<dbReference type="PROSITE" id="PS00609">
    <property type="entry name" value="GLYCOSYL_HYDROL_F32"/>
    <property type="match status" value="1"/>
</dbReference>